<proteinExistence type="inferred from homology"/>
<comment type="function">
    <text evidence="1">This protein is located at the 30S-50S ribosomal subunit interface and may play a role in the structure and function of the aminoacyl-tRNA binding site.</text>
</comment>
<comment type="similarity">
    <text evidence="1">Belongs to the bacterial ribosomal protein bL19 family.</text>
</comment>
<gene>
    <name evidence="1" type="primary">rplS</name>
    <name type="ordered locus">CFPG_383</name>
</gene>
<evidence type="ECO:0000255" key="1">
    <source>
        <dbReference type="HAMAP-Rule" id="MF_00402"/>
    </source>
</evidence>
<evidence type="ECO:0000305" key="2"/>
<dbReference type="EMBL" id="AP010656">
    <property type="protein sequence ID" value="BAG83646.1"/>
    <property type="molecule type" value="Genomic_DNA"/>
</dbReference>
<dbReference type="RefSeq" id="WP_012573407.1">
    <property type="nucleotide sequence ID" value="NC_011565.1"/>
</dbReference>
<dbReference type="SMR" id="B6YR24"/>
<dbReference type="STRING" id="511995.CFPG_383"/>
<dbReference type="KEGG" id="aps:CFPG_383"/>
<dbReference type="eggNOG" id="COG0335">
    <property type="taxonomic scope" value="Bacteria"/>
</dbReference>
<dbReference type="HOGENOM" id="CLU_103507_2_2_10"/>
<dbReference type="OrthoDB" id="9803541at2"/>
<dbReference type="Proteomes" id="UP000000723">
    <property type="component" value="Chromosome"/>
</dbReference>
<dbReference type="GO" id="GO:0022625">
    <property type="term" value="C:cytosolic large ribosomal subunit"/>
    <property type="evidence" value="ECO:0007669"/>
    <property type="project" value="TreeGrafter"/>
</dbReference>
<dbReference type="GO" id="GO:0003735">
    <property type="term" value="F:structural constituent of ribosome"/>
    <property type="evidence" value="ECO:0007669"/>
    <property type="project" value="InterPro"/>
</dbReference>
<dbReference type="GO" id="GO:0006412">
    <property type="term" value="P:translation"/>
    <property type="evidence" value="ECO:0007669"/>
    <property type="project" value="UniProtKB-UniRule"/>
</dbReference>
<dbReference type="Gene3D" id="2.30.30.790">
    <property type="match status" value="1"/>
</dbReference>
<dbReference type="HAMAP" id="MF_00402">
    <property type="entry name" value="Ribosomal_bL19"/>
    <property type="match status" value="1"/>
</dbReference>
<dbReference type="InterPro" id="IPR001857">
    <property type="entry name" value="Ribosomal_bL19"/>
</dbReference>
<dbReference type="InterPro" id="IPR018257">
    <property type="entry name" value="Ribosomal_bL19_CS"/>
</dbReference>
<dbReference type="InterPro" id="IPR038657">
    <property type="entry name" value="Ribosomal_bL19_sf"/>
</dbReference>
<dbReference type="InterPro" id="IPR008991">
    <property type="entry name" value="Translation_prot_SH3-like_sf"/>
</dbReference>
<dbReference type="NCBIfam" id="TIGR01024">
    <property type="entry name" value="rplS_bact"/>
    <property type="match status" value="1"/>
</dbReference>
<dbReference type="PANTHER" id="PTHR15680:SF9">
    <property type="entry name" value="LARGE RIBOSOMAL SUBUNIT PROTEIN BL19M"/>
    <property type="match status" value="1"/>
</dbReference>
<dbReference type="PANTHER" id="PTHR15680">
    <property type="entry name" value="RIBOSOMAL PROTEIN L19"/>
    <property type="match status" value="1"/>
</dbReference>
<dbReference type="Pfam" id="PF01245">
    <property type="entry name" value="Ribosomal_L19"/>
    <property type="match status" value="1"/>
</dbReference>
<dbReference type="PIRSF" id="PIRSF002191">
    <property type="entry name" value="Ribosomal_L19"/>
    <property type="match status" value="1"/>
</dbReference>
<dbReference type="PRINTS" id="PR00061">
    <property type="entry name" value="RIBOSOMALL19"/>
</dbReference>
<dbReference type="SUPFAM" id="SSF50104">
    <property type="entry name" value="Translation proteins SH3-like domain"/>
    <property type="match status" value="1"/>
</dbReference>
<dbReference type="PROSITE" id="PS01015">
    <property type="entry name" value="RIBOSOMAL_L19"/>
    <property type="match status" value="1"/>
</dbReference>
<reference key="1">
    <citation type="journal article" date="2008" name="Science">
        <title>Genome of an endosymbiont coupling N2 fixation to cellulolysis within RT protist cells in termite gut.</title>
        <authorList>
            <person name="Hongoh Y."/>
            <person name="Sharma V.K."/>
            <person name="Prakash T."/>
            <person name="Noda S."/>
            <person name="Toh H."/>
            <person name="Taylor T.D."/>
            <person name="Kudo T."/>
            <person name="Sakaki Y."/>
            <person name="Toyoda A."/>
            <person name="Hattori M."/>
            <person name="Ohkuma M."/>
        </authorList>
    </citation>
    <scope>NUCLEOTIDE SEQUENCE [LARGE SCALE GENOMIC DNA]</scope>
</reference>
<sequence length="117" mass="13682">MDLIKVVEQRFADLTQKAYPHFKSGDTITVAYRIKEGNKERIQQYRGVVIKMAGHGSSKRFTVRKMSENIGVERIFPINSPFIDNIVLNKIGKVRRSKLYYLRKLIGKKSRIKEKRI</sequence>
<organism>
    <name type="scientific">Azobacteroides pseudotrichonymphae genomovar. CFP2</name>
    <dbReference type="NCBI Taxonomy" id="511995"/>
    <lineage>
        <taxon>Bacteria</taxon>
        <taxon>Pseudomonadati</taxon>
        <taxon>Bacteroidota</taxon>
        <taxon>Bacteroidia</taxon>
        <taxon>Bacteroidales</taxon>
        <taxon>Candidatus Azobacteroides</taxon>
    </lineage>
</organism>
<protein>
    <recommendedName>
        <fullName evidence="1">Large ribosomal subunit protein bL19</fullName>
    </recommendedName>
    <alternativeName>
        <fullName evidence="2">50S ribosomal protein L19</fullName>
    </alternativeName>
</protein>
<name>RL19_AZOPC</name>
<keyword id="KW-1185">Reference proteome</keyword>
<keyword id="KW-0687">Ribonucleoprotein</keyword>
<keyword id="KW-0689">Ribosomal protein</keyword>
<accession>B6YR24</accession>
<feature type="chain" id="PRO_1000193788" description="Large ribosomal subunit protein bL19">
    <location>
        <begin position="1"/>
        <end position="117"/>
    </location>
</feature>